<keyword id="KW-0150">Chloroplast</keyword>
<keyword id="KW-0472">Membrane</keyword>
<keyword id="KW-0602">Photosynthesis</keyword>
<keyword id="KW-0603">Photosystem I</keyword>
<keyword id="KW-0934">Plastid</keyword>
<keyword id="KW-0793">Thylakoid</keyword>
<keyword id="KW-0812">Transmembrane</keyword>
<keyword id="KW-1133">Transmembrane helix</keyword>
<gene>
    <name evidence="1" type="primary">psaI</name>
    <name type="ordered locus">Grc000196</name>
</gene>
<feature type="chain" id="PRO_0000194653" description="Photosystem I reaction center subunit VIII">
    <location>
        <begin position="1"/>
        <end position="36"/>
    </location>
</feature>
<feature type="transmembrane region" description="Helical" evidence="1">
    <location>
        <begin position="7"/>
        <end position="29"/>
    </location>
</feature>
<protein>
    <recommendedName>
        <fullName evidence="1">Photosystem I reaction center subunit VIII</fullName>
        <shortName evidence="1">PSI-I</shortName>
    </recommendedName>
</protein>
<comment type="function">
    <text evidence="1">May help in the organization of the PsaL subunit.</text>
</comment>
<comment type="subcellular location">
    <subcellularLocation>
        <location evidence="1">Plastid</location>
        <location evidence="1">Chloroplast thylakoid membrane</location>
        <topology evidence="1">Single-pass membrane protein</topology>
    </subcellularLocation>
</comment>
<comment type="similarity">
    <text evidence="1">Belongs to the PsaI family.</text>
</comment>
<geneLocation type="chloroplast"/>
<name>PSAI_GRATL</name>
<organism>
    <name type="scientific">Gracilaria tenuistipitata var. liui</name>
    <name type="common">Red alga</name>
    <dbReference type="NCBI Taxonomy" id="285951"/>
    <lineage>
        <taxon>Eukaryota</taxon>
        <taxon>Rhodophyta</taxon>
        <taxon>Florideophyceae</taxon>
        <taxon>Rhodymeniophycidae</taxon>
        <taxon>Gracilariales</taxon>
        <taxon>Gracilariaceae</taxon>
        <taxon>Gracilaria</taxon>
        <taxon>Gracilaria tenuistipitata</taxon>
    </lineage>
</organism>
<reference key="1">
    <citation type="journal article" date="2004" name="J. Mol. Evol.">
        <title>Comparative analysis of the complete plastid genome sequence of the red alga Gracilaria tenuistipitata var. liui provides insights into the evolution of rhodoplasts and their relationship to other plastids.</title>
        <authorList>
            <person name="Hagopian J.C."/>
            <person name="Reis M."/>
            <person name="Kitajima J.P."/>
            <person name="Bhattacharya D."/>
            <person name="de Oliveira M.C."/>
        </authorList>
    </citation>
    <scope>NUCLEOTIDE SEQUENCE [LARGE SCALE GENOMIC DNA]</scope>
</reference>
<accession>Q6B8K8</accession>
<dbReference type="EMBL" id="AY673996">
    <property type="protein sequence ID" value="AAT79777.1"/>
    <property type="molecule type" value="Genomic_DNA"/>
</dbReference>
<dbReference type="RefSeq" id="YP_063702.1">
    <property type="nucleotide sequence ID" value="NC_006137.1"/>
</dbReference>
<dbReference type="SMR" id="Q6B8K8"/>
<dbReference type="GeneID" id="2943969"/>
<dbReference type="GO" id="GO:0009535">
    <property type="term" value="C:chloroplast thylakoid membrane"/>
    <property type="evidence" value="ECO:0007669"/>
    <property type="project" value="UniProtKB-SubCell"/>
</dbReference>
<dbReference type="GO" id="GO:0009522">
    <property type="term" value="C:photosystem I"/>
    <property type="evidence" value="ECO:0007669"/>
    <property type="project" value="UniProtKB-KW"/>
</dbReference>
<dbReference type="GO" id="GO:0015979">
    <property type="term" value="P:photosynthesis"/>
    <property type="evidence" value="ECO:0007669"/>
    <property type="project" value="UniProtKB-UniRule"/>
</dbReference>
<dbReference type="HAMAP" id="MF_00431">
    <property type="entry name" value="PSI_PsaI"/>
    <property type="match status" value="1"/>
</dbReference>
<dbReference type="InterPro" id="IPR001302">
    <property type="entry name" value="PSI_PsaI"/>
</dbReference>
<dbReference type="InterPro" id="IPR036357">
    <property type="entry name" value="PSI_PsaI_sf"/>
</dbReference>
<dbReference type="NCBIfam" id="NF008830">
    <property type="entry name" value="PRK11877.1"/>
    <property type="match status" value="1"/>
</dbReference>
<dbReference type="NCBIfam" id="TIGR03052">
    <property type="entry name" value="PS_I_psaI"/>
    <property type="match status" value="1"/>
</dbReference>
<dbReference type="PANTHER" id="PTHR35775">
    <property type="match status" value="1"/>
</dbReference>
<dbReference type="PANTHER" id="PTHR35775:SF2">
    <property type="entry name" value="PHOTOSYSTEM I REACTION CENTER SUBUNIT VIII"/>
    <property type="match status" value="1"/>
</dbReference>
<dbReference type="Pfam" id="PF00796">
    <property type="entry name" value="PSI_8"/>
    <property type="match status" value="1"/>
</dbReference>
<dbReference type="SUPFAM" id="SSF81540">
    <property type="entry name" value="Subunit VIII of photosystem I reaction centre, PsaI"/>
    <property type="match status" value="1"/>
</dbReference>
<proteinExistence type="inferred from homology"/>
<sequence>MTGSYLPSILVPLVGIIFPGISMALLFIYIEEENIS</sequence>
<evidence type="ECO:0000255" key="1">
    <source>
        <dbReference type="HAMAP-Rule" id="MF_00431"/>
    </source>
</evidence>